<protein>
    <recommendedName>
        <fullName>Cytochrome b</fullName>
    </recommendedName>
    <alternativeName>
        <fullName>Complex III subunit 3</fullName>
    </alternativeName>
    <alternativeName>
        <fullName>Complex III subunit III</fullName>
    </alternativeName>
    <alternativeName>
        <fullName>Cytochrome b-c1 complex subunit 3</fullName>
    </alternativeName>
    <alternativeName>
        <fullName>Ubiquinol-cytochrome-c reductase complex cytochrome b subunit</fullName>
    </alternativeName>
</protein>
<comment type="function">
    <text evidence="1">Component of the ubiquinol-cytochrome c reductase complex (complex III or cytochrome b-c1 complex) that is part of the mitochondrial respiratory chain. The b-c1 complex mediates electron transfer from ubiquinol to cytochrome c. Contributes to the generation of a proton gradient across the mitochondrial membrane that is then used for ATP synthesis.</text>
</comment>
<comment type="cofactor">
    <cofactor evidence="1">
        <name>heme b</name>
        <dbReference type="ChEBI" id="CHEBI:60344"/>
    </cofactor>
    <text evidence="1">Binds 2 heme b groups non-covalently.</text>
</comment>
<comment type="subunit">
    <text evidence="1">The main subunits of complex b-c1 are: cytochrome b, cytochrome c1 and the Rieske protein.</text>
</comment>
<comment type="subcellular location">
    <subcellularLocation>
        <location evidence="2">Mitochondrion inner membrane</location>
        <topology evidence="2">Multi-pass membrane protein</topology>
    </subcellularLocation>
</comment>
<comment type="similarity">
    <text evidence="4 5">Belongs to the cytochrome b family.</text>
</comment>
<comment type="caution">
    <text evidence="1">The full-length protein contains only eight transmembrane helices, not nine as predicted by bioinformatics tools.</text>
</comment>
<accession>B1GYJ5</accession>
<evidence type="ECO:0000250" key="1">
    <source>
        <dbReference type="UniProtKB" id="P00157"/>
    </source>
</evidence>
<evidence type="ECO:0000250" key="2">
    <source>
        <dbReference type="UniProtKB" id="P00163"/>
    </source>
</evidence>
<evidence type="ECO:0000255" key="3"/>
<evidence type="ECO:0000255" key="4">
    <source>
        <dbReference type="PROSITE-ProRule" id="PRU00967"/>
    </source>
</evidence>
<evidence type="ECO:0000255" key="5">
    <source>
        <dbReference type="PROSITE-ProRule" id="PRU00968"/>
    </source>
</evidence>
<gene>
    <name type="primary">mt:Cyt-b</name>
    <name type="synonym">Cob</name>
    <name type="synonym">cytb</name>
</gene>
<reference key="1">
    <citation type="journal article" date="2008" name="Mol. Biol. Evol.">
        <title>Two circular chromosomes of unequal copy number make up the mitochondrial genome of the rotifer Brachionus plicatilis.</title>
        <authorList>
            <person name="Suga K."/>
            <person name="Welch D.B.M."/>
            <person name="Tanaka Y."/>
            <person name="Sakakura Y."/>
            <person name="Hagiwara A."/>
        </authorList>
    </citation>
    <scope>NUCLEOTIDE SEQUENCE [GENOMIC DNA]</scope>
    <source>
        <strain>NH1L</strain>
    </source>
</reference>
<proteinExistence type="inferred from homology"/>
<dbReference type="EMBL" id="AP009407">
    <property type="protein sequence ID" value="BAG12874.1"/>
    <property type="molecule type" value="Genomic_DNA"/>
</dbReference>
<dbReference type="RefSeq" id="YP_001728980.1">
    <property type="nucleotide sequence ID" value="NC_010472.1"/>
</dbReference>
<dbReference type="SMR" id="B1GYJ5"/>
<dbReference type="GeneID" id="6054831"/>
<dbReference type="CTD" id="4519"/>
<dbReference type="GO" id="GO:0005743">
    <property type="term" value="C:mitochondrial inner membrane"/>
    <property type="evidence" value="ECO:0007669"/>
    <property type="project" value="UniProtKB-SubCell"/>
</dbReference>
<dbReference type="GO" id="GO:0045275">
    <property type="term" value="C:respiratory chain complex III"/>
    <property type="evidence" value="ECO:0007669"/>
    <property type="project" value="InterPro"/>
</dbReference>
<dbReference type="GO" id="GO:0046872">
    <property type="term" value="F:metal ion binding"/>
    <property type="evidence" value="ECO:0007669"/>
    <property type="project" value="UniProtKB-KW"/>
</dbReference>
<dbReference type="GO" id="GO:0008121">
    <property type="term" value="F:ubiquinol-cytochrome-c reductase activity"/>
    <property type="evidence" value="ECO:0007669"/>
    <property type="project" value="InterPro"/>
</dbReference>
<dbReference type="GO" id="GO:0006122">
    <property type="term" value="P:mitochondrial electron transport, ubiquinol to cytochrome c"/>
    <property type="evidence" value="ECO:0007669"/>
    <property type="project" value="TreeGrafter"/>
</dbReference>
<dbReference type="CDD" id="cd00284">
    <property type="entry name" value="Cytochrome_b_N"/>
    <property type="match status" value="1"/>
</dbReference>
<dbReference type="Gene3D" id="1.20.810.10">
    <property type="entry name" value="Cytochrome Bc1 Complex, Chain C"/>
    <property type="match status" value="1"/>
</dbReference>
<dbReference type="InterPro" id="IPR005798">
    <property type="entry name" value="Cyt_b/b6_C"/>
</dbReference>
<dbReference type="InterPro" id="IPR036150">
    <property type="entry name" value="Cyt_b/b6_C_sf"/>
</dbReference>
<dbReference type="InterPro" id="IPR005797">
    <property type="entry name" value="Cyt_b/b6_N"/>
</dbReference>
<dbReference type="InterPro" id="IPR027387">
    <property type="entry name" value="Cytb/b6-like_sf"/>
</dbReference>
<dbReference type="InterPro" id="IPR030689">
    <property type="entry name" value="Cytochrome_b"/>
</dbReference>
<dbReference type="InterPro" id="IPR048259">
    <property type="entry name" value="Cytochrome_b_N_euk/bac"/>
</dbReference>
<dbReference type="InterPro" id="IPR016174">
    <property type="entry name" value="Di-haem_cyt_TM"/>
</dbReference>
<dbReference type="PANTHER" id="PTHR19271">
    <property type="entry name" value="CYTOCHROME B"/>
    <property type="match status" value="1"/>
</dbReference>
<dbReference type="PANTHER" id="PTHR19271:SF16">
    <property type="entry name" value="CYTOCHROME B"/>
    <property type="match status" value="1"/>
</dbReference>
<dbReference type="Pfam" id="PF00032">
    <property type="entry name" value="Cytochrom_B_C"/>
    <property type="match status" value="1"/>
</dbReference>
<dbReference type="Pfam" id="PF00033">
    <property type="entry name" value="Cytochrome_B"/>
    <property type="match status" value="1"/>
</dbReference>
<dbReference type="PIRSF" id="PIRSF038885">
    <property type="entry name" value="COB"/>
    <property type="match status" value="1"/>
</dbReference>
<dbReference type="SUPFAM" id="SSF81648">
    <property type="entry name" value="a domain/subunit of cytochrome bc1 complex (Ubiquinol-cytochrome c reductase)"/>
    <property type="match status" value="1"/>
</dbReference>
<dbReference type="SUPFAM" id="SSF81342">
    <property type="entry name" value="Transmembrane di-heme cytochromes"/>
    <property type="match status" value="1"/>
</dbReference>
<dbReference type="PROSITE" id="PS51003">
    <property type="entry name" value="CYTB_CTER"/>
    <property type="match status" value="1"/>
</dbReference>
<dbReference type="PROSITE" id="PS51002">
    <property type="entry name" value="CYTB_NTER"/>
    <property type="match status" value="1"/>
</dbReference>
<geneLocation type="mitochondrion"/>
<name>CYB_BRAPC</name>
<organism>
    <name type="scientific">Brachionus plicatilis</name>
    <name type="common">Marine rotifer</name>
    <name type="synonym">Brachionus muelleri</name>
    <dbReference type="NCBI Taxonomy" id="10195"/>
    <lineage>
        <taxon>Eukaryota</taxon>
        <taxon>Metazoa</taxon>
        <taxon>Spiralia</taxon>
        <taxon>Gnathifera</taxon>
        <taxon>Rotifera</taxon>
        <taxon>Eurotatoria</taxon>
        <taxon>Monogononta</taxon>
        <taxon>Pseudotrocha</taxon>
        <taxon>Ploima</taxon>
        <taxon>Brachionidae</taxon>
        <taxon>Brachionus</taxon>
    </lineage>
</organism>
<feature type="chain" id="PRO_0000357458" description="Cytochrome b">
    <location>
        <begin position="1"/>
        <end position="379"/>
    </location>
</feature>
<feature type="transmembrane region" description="Helical" evidence="2">
    <location>
        <begin position="32"/>
        <end position="52"/>
    </location>
</feature>
<feature type="transmembrane region" description="Helical" evidence="2">
    <location>
        <begin position="76"/>
        <end position="98"/>
    </location>
</feature>
<feature type="transmembrane region" description="Helical" evidence="2">
    <location>
        <begin position="111"/>
        <end position="131"/>
    </location>
</feature>
<feature type="transmembrane region" description="Helical" evidence="2">
    <location>
        <begin position="177"/>
        <end position="197"/>
    </location>
</feature>
<feature type="transmembrane region" description="Helical" evidence="2">
    <location>
        <begin position="223"/>
        <end position="243"/>
    </location>
</feature>
<feature type="transmembrane region" description="Helical" evidence="3">
    <location>
        <begin position="287"/>
        <end position="304"/>
    </location>
</feature>
<feature type="transmembrane region" description="Helical" evidence="1">
    <location>
        <begin position="320"/>
        <end position="340"/>
    </location>
</feature>
<feature type="transmembrane region" description="Helical" evidence="3">
    <location>
        <begin position="348"/>
        <end position="367"/>
    </location>
</feature>
<feature type="binding site" description="axial binding residue" evidence="1">
    <location>
        <position position="82"/>
    </location>
    <ligand>
        <name>heme b</name>
        <dbReference type="ChEBI" id="CHEBI:60344"/>
        <label>b562</label>
    </ligand>
    <ligandPart>
        <name>Fe</name>
        <dbReference type="ChEBI" id="CHEBI:18248"/>
    </ligandPart>
</feature>
<feature type="binding site" description="axial binding residue" evidence="1">
    <location>
        <position position="96"/>
    </location>
    <ligand>
        <name>heme b</name>
        <dbReference type="ChEBI" id="CHEBI:60344"/>
        <label>b566</label>
    </ligand>
    <ligandPart>
        <name>Fe</name>
        <dbReference type="ChEBI" id="CHEBI:18248"/>
    </ligandPart>
</feature>
<feature type="binding site" description="axial binding residue" evidence="1">
    <location>
        <position position="181"/>
    </location>
    <ligand>
        <name>heme b</name>
        <dbReference type="ChEBI" id="CHEBI:60344"/>
        <label>b562</label>
    </ligand>
    <ligandPart>
        <name>Fe</name>
        <dbReference type="ChEBI" id="CHEBI:18248"/>
    </ligandPart>
</feature>
<feature type="binding site" description="axial binding residue" evidence="1">
    <location>
        <position position="195"/>
    </location>
    <ligand>
        <name>heme b</name>
        <dbReference type="ChEBI" id="CHEBI:60344"/>
        <label>b566</label>
    </ligand>
    <ligandPart>
        <name>Fe</name>
        <dbReference type="ChEBI" id="CHEBI:18248"/>
    </ligandPart>
</feature>
<feature type="binding site" evidence="1">
    <location>
        <position position="200"/>
    </location>
    <ligand>
        <name>a ubiquinone</name>
        <dbReference type="ChEBI" id="CHEBI:16389"/>
    </ligand>
</feature>
<keyword id="KW-0249">Electron transport</keyword>
<keyword id="KW-0349">Heme</keyword>
<keyword id="KW-0408">Iron</keyword>
<keyword id="KW-0472">Membrane</keyword>
<keyword id="KW-0479">Metal-binding</keyword>
<keyword id="KW-0496">Mitochondrion</keyword>
<keyword id="KW-0999">Mitochondrion inner membrane</keyword>
<keyword id="KW-0679">Respiratory chain</keyword>
<keyword id="KW-0812">Transmembrane</keyword>
<keyword id="KW-1133">Transmembrane helix</keyword>
<keyword id="KW-0813">Transport</keyword>
<keyword id="KW-0830">Ubiquinone</keyword>
<sequence>MSFRKTHPLIKIVNSTLVDLPSPANLSVNWNYGSLLGLVLVIQLITGIVLATRFSGHSDMSFDSVISIYQDSNYGWLLRLVHSTGASFFFLFIYLHIGRGLYYGSYVYPEVWNIGVLIYLILMGTAFLGYVLPWGQMSYWAATVITNLLSAIPWLGPTMVEWVWGGFAVGNPTLTRFFALHYLLPFVVTALVILHIFYLHIYGSSNPLGISSNTNKVSFHYYYSVKDLYVYFVFFFVFMVFTLKYGYVFMDAENFIPANPLVTPTHIQPEWYFLFAYAILRSIPNKLGGVVGLLLAVLVLFLFSVSTSKLLFSGTIYSPLARLLYWSLVSNFFLLTWLGSCPAESPYNEVALVATVTYFTFMLTMCALPHISTYLYLKS</sequence>